<dbReference type="EMBL" id="CP001400">
    <property type="protein sequence ID" value="ACP38506.1"/>
    <property type="molecule type" value="Genomic_DNA"/>
</dbReference>
<dbReference type="RefSeq" id="WP_012711736.1">
    <property type="nucleotide sequence ID" value="NC_012588.1"/>
</dbReference>
<dbReference type="SMR" id="C3MXH2"/>
<dbReference type="KEGG" id="sia:M1425_1761"/>
<dbReference type="HOGENOM" id="CLU_074237_4_0_2"/>
<dbReference type="Proteomes" id="UP000001350">
    <property type="component" value="Chromosome"/>
</dbReference>
<dbReference type="GO" id="GO:0015934">
    <property type="term" value="C:large ribosomal subunit"/>
    <property type="evidence" value="ECO:0007669"/>
    <property type="project" value="TreeGrafter"/>
</dbReference>
<dbReference type="GO" id="GO:0070180">
    <property type="term" value="F:large ribosomal subunit rRNA binding"/>
    <property type="evidence" value="ECO:0007669"/>
    <property type="project" value="UniProtKB-UniRule"/>
</dbReference>
<dbReference type="GO" id="GO:0003735">
    <property type="term" value="F:structural constituent of ribosome"/>
    <property type="evidence" value="ECO:0007669"/>
    <property type="project" value="InterPro"/>
</dbReference>
<dbReference type="GO" id="GO:0006412">
    <property type="term" value="P:translation"/>
    <property type="evidence" value="ECO:0007669"/>
    <property type="project" value="UniProtKB-UniRule"/>
</dbReference>
<dbReference type="CDD" id="cd00349">
    <property type="entry name" value="Ribosomal_L11"/>
    <property type="match status" value="1"/>
</dbReference>
<dbReference type="FunFam" id="1.10.10.250:FF:000006">
    <property type="entry name" value="50S ribosomal protein L11"/>
    <property type="match status" value="1"/>
</dbReference>
<dbReference type="FunFam" id="3.30.1550.10:FF:000007">
    <property type="entry name" value="50S ribosomal protein L11"/>
    <property type="match status" value="1"/>
</dbReference>
<dbReference type="Gene3D" id="1.10.10.250">
    <property type="entry name" value="Ribosomal protein L11, C-terminal domain"/>
    <property type="match status" value="1"/>
</dbReference>
<dbReference type="Gene3D" id="3.30.1550.10">
    <property type="entry name" value="Ribosomal protein L11/L12, N-terminal domain"/>
    <property type="match status" value="1"/>
</dbReference>
<dbReference type="HAMAP" id="MF_00736">
    <property type="entry name" value="Ribosomal_uL11"/>
    <property type="match status" value="1"/>
</dbReference>
<dbReference type="InterPro" id="IPR000911">
    <property type="entry name" value="Ribosomal_uL11"/>
</dbReference>
<dbReference type="InterPro" id="IPR020783">
    <property type="entry name" value="Ribosomal_uL11_C"/>
</dbReference>
<dbReference type="InterPro" id="IPR036769">
    <property type="entry name" value="Ribosomal_uL11_C_sf"/>
</dbReference>
<dbReference type="InterPro" id="IPR020785">
    <property type="entry name" value="Ribosomal_uL11_CS"/>
</dbReference>
<dbReference type="InterPro" id="IPR020784">
    <property type="entry name" value="Ribosomal_uL11_N"/>
</dbReference>
<dbReference type="InterPro" id="IPR036796">
    <property type="entry name" value="Ribosomal_uL11_N_sf"/>
</dbReference>
<dbReference type="NCBIfam" id="NF002232">
    <property type="entry name" value="PRK01143.1"/>
    <property type="match status" value="1"/>
</dbReference>
<dbReference type="PANTHER" id="PTHR11661">
    <property type="entry name" value="60S RIBOSOMAL PROTEIN L12"/>
    <property type="match status" value="1"/>
</dbReference>
<dbReference type="PANTHER" id="PTHR11661:SF1">
    <property type="entry name" value="LARGE RIBOSOMAL SUBUNIT PROTEIN UL11M"/>
    <property type="match status" value="1"/>
</dbReference>
<dbReference type="Pfam" id="PF00298">
    <property type="entry name" value="Ribosomal_L11"/>
    <property type="match status" value="1"/>
</dbReference>
<dbReference type="Pfam" id="PF03946">
    <property type="entry name" value="Ribosomal_L11_N"/>
    <property type="match status" value="1"/>
</dbReference>
<dbReference type="SMART" id="SM00649">
    <property type="entry name" value="RL11"/>
    <property type="match status" value="1"/>
</dbReference>
<dbReference type="SUPFAM" id="SSF54747">
    <property type="entry name" value="Ribosomal L11/L12e N-terminal domain"/>
    <property type="match status" value="1"/>
</dbReference>
<dbReference type="SUPFAM" id="SSF46906">
    <property type="entry name" value="Ribosomal protein L11, C-terminal domain"/>
    <property type="match status" value="1"/>
</dbReference>
<dbReference type="PROSITE" id="PS00359">
    <property type="entry name" value="RIBOSOMAL_L11"/>
    <property type="match status" value="1"/>
</dbReference>
<accession>C3MXH2</accession>
<sequence>MPTKSIKIMVEGGNVKPGPPLAPTLSQLGLNVGEVVKKLNEATSSFKGMSVPVTIEVDSNTKKYEIKVGIPTTTALLLKEAGVSEPSGDPAHKKIGNLSLEQVIKIAIMKKPGLTTKSLKAAVKSMLGTAKSIGVTVENKDPKELVKEVEEGKYDDLLAKYENEWNEVKE</sequence>
<keyword id="KW-0687">Ribonucleoprotein</keyword>
<keyword id="KW-0689">Ribosomal protein</keyword>
<keyword id="KW-0694">RNA-binding</keyword>
<keyword id="KW-0699">rRNA-binding</keyword>
<evidence type="ECO:0000255" key="1">
    <source>
        <dbReference type="HAMAP-Rule" id="MF_00736"/>
    </source>
</evidence>
<evidence type="ECO:0000305" key="2"/>
<comment type="function">
    <text evidence="1">Forms part of the ribosomal stalk which helps the ribosome interact with GTP-bound translation factors.</text>
</comment>
<comment type="subunit">
    <text evidence="1">Part of the ribosomal stalk of the 50S ribosomal subunit. Interacts with L10 and the large rRNA to form the base of the stalk. L10 forms an elongated spine to which L12 dimers bind in a sequential fashion forming a multimeric L10(L12)X complex.</text>
</comment>
<comment type="similarity">
    <text evidence="1">Belongs to the universal ribosomal protein uL11 family.</text>
</comment>
<name>RL11_SACI4</name>
<proteinExistence type="inferred from homology"/>
<gene>
    <name evidence="1" type="primary">rpl11</name>
    <name type="ordered locus">M1425_1761</name>
</gene>
<reference key="1">
    <citation type="journal article" date="2009" name="Proc. Natl. Acad. Sci. U.S.A.">
        <title>Biogeography of the Sulfolobus islandicus pan-genome.</title>
        <authorList>
            <person name="Reno M.L."/>
            <person name="Held N.L."/>
            <person name="Fields C.J."/>
            <person name="Burke P.V."/>
            <person name="Whitaker R.J."/>
        </authorList>
    </citation>
    <scope>NUCLEOTIDE SEQUENCE [LARGE SCALE GENOMIC DNA]</scope>
    <source>
        <strain>M.14.25 / Kamchatka #1</strain>
    </source>
</reference>
<feature type="chain" id="PRO_1000212791" description="Large ribosomal subunit protein uL11">
    <location>
        <begin position="1"/>
        <end position="170"/>
    </location>
</feature>
<organism>
    <name type="scientific">Saccharolobus islandicus (strain M.14.25 / Kamchatka #1)</name>
    <name type="common">Sulfolobus islandicus</name>
    <dbReference type="NCBI Taxonomy" id="427317"/>
    <lineage>
        <taxon>Archaea</taxon>
        <taxon>Thermoproteota</taxon>
        <taxon>Thermoprotei</taxon>
        <taxon>Sulfolobales</taxon>
        <taxon>Sulfolobaceae</taxon>
        <taxon>Saccharolobus</taxon>
    </lineage>
</organism>
<protein>
    <recommendedName>
        <fullName evidence="1">Large ribosomal subunit protein uL11</fullName>
    </recommendedName>
    <alternativeName>
        <fullName evidence="2">50S ribosomal protein L11</fullName>
    </alternativeName>
</protein>